<protein>
    <recommendedName>
        <fullName>Short neurotoxin 2</fullName>
        <shortName>SNTX-2</shortName>
    </recommendedName>
</protein>
<feature type="signal peptide" evidence="1">
    <location>
        <begin position="1"/>
        <end position="21"/>
    </location>
</feature>
<feature type="chain" id="PRO_5000279909" description="Short neurotoxin 2">
    <location>
        <begin position="22"/>
        <end position="81"/>
    </location>
</feature>
<feature type="disulfide bond" evidence="2">
    <location>
        <begin position="24"/>
        <end position="43"/>
    </location>
</feature>
<feature type="disulfide bond" evidence="2">
    <location>
        <begin position="38"/>
        <end position="60"/>
    </location>
</feature>
<feature type="disulfide bond" evidence="2">
    <location>
        <begin position="62"/>
        <end position="73"/>
    </location>
</feature>
<feature type="disulfide bond" evidence="2">
    <location>
        <begin position="74"/>
        <end position="79"/>
    </location>
</feature>
<reference key="1">
    <citation type="journal article" date="2007" name="Cell. Mol. Life Sci.">
        <title>Distinct activities of novel neurotoxins from Australian venomous snakes for nicotinic acetylcholine receptors.</title>
        <authorList>
            <person name="St Pierre L."/>
            <person name="Fischer H."/>
            <person name="Adams D.J."/>
            <person name="Schenning M."/>
            <person name="Lavidis N."/>
            <person name="de Jersey J."/>
            <person name="Masci P.P."/>
            <person name="Lavin M.F."/>
        </authorList>
    </citation>
    <scope>NUCLEOTIDE SEQUENCE [MRNA]</scope>
    <source>
        <tissue>Venom gland</tissue>
    </source>
</reference>
<accession>A8HDJ6</accession>
<sequence>MKTLLLTLVVVTIVCLDLGYTMTCCNQQSSQPKTTTPCAESSCYKKTWKDHRGTIIERGCGCPNVKPGIDLMCCRTDECNN</sequence>
<comment type="function">
    <text evidence="3">Binds to muscle nicotinic acetylcholine receptor (nAChR) and inhibit acetylcholine from binding to the receptor, thereby impairing neuromuscular transmission.</text>
</comment>
<comment type="subcellular location">
    <subcellularLocation>
        <location evidence="1">Secreted</location>
    </subcellularLocation>
</comment>
<comment type="tissue specificity">
    <text evidence="4">Expressed by the venom gland.</text>
</comment>
<comment type="similarity">
    <text evidence="4">Belongs to the three-finger toxin family. Short-chain subfamily. Type I alpha-neurotoxin sub-subfamily.</text>
</comment>
<evidence type="ECO:0000250" key="1"/>
<evidence type="ECO:0000250" key="2">
    <source>
        <dbReference type="UniProtKB" id="P0C1Z0"/>
    </source>
</evidence>
<evidence type="ECO:0000250" key="3">
    <source>
        <dbReference type="UniProtKB" id="P60775"/>
    </source>
</evidence>
<evidence type="ECO:0000305" key="4"/>
<proteinExistence type="inferred from homology"/>
<keyword id="KW-0008">Acetylcholine receptor inhibiting toxin</keyword>
<keyword id="KW-1015">Disulfide bond</keyword>
<keyword id="KW-0872">Ion channel impairing toxin</keyword>
<keyword id="KW-0528">Neurotoxin</keyword>
<keyword id="KW-0629">Postsynaptic neurotoxin</keyword>
<keyword id="KW-0964">Secreted</keyword>
<keyword id="KW-0732">Signal</keyword>
<keyword id="KW-0800">Toxin</keyword>
<dbReference type="EMBL" id="DQ917501">
    <property type="protein sequence ID" value="ABK63530.1"/>
    <property type="molecule type" value="mRNA"/>
</dbReference>
<dbReference type="SMR" id="A8HDJ6"/>
<dbReference type="GO" id="GO:0005576">
    <property type="term" value="C:extracellular region"/>
    <property type="evidence" value="ECO:0007669"/>
    <property type="project" value="UniProtKB-SubCell"/>
</dbReference>
<dbReference type="GO" id="GO:0030550">
    <property type="term" value="F:acetylcholine receptor inhibitor activity"/>
    <property type="evidence" value="ECO:0007669"/>
    <property type="project" value="UniProtKB-KW"/>
</dbReference>
<dbReference type="GO" id="GO:0099106">
    <property type="term" value="F:ion channel regulator activity"/>
    <property type="evidence" value="ECO:0007669"/>
    <property type="project" value="UniProtKB-KW"/>
</dbReference>
<dbReference type="GO" id="GO:0090729">
    <property type="term" value="F:toxin activity"/>
    <property type="evidence" value="ECO:0007669"/>
    <property type="project" value="UniProtKB-KW"/>
</dbReference>
<dbReference type="CDD" id="cd00206">
    <property type="entry name" value="TFP_snake_toxin"/>
    <property type="match status" value="1"/>
</dbReference>
<dbReference type="Gene3D" id="2.10.60.10">
    <property type="entry name" value="CD59"/>
    <property type="match status" value="1"/>
</dbReference>
<dbReference type="InterPro" id="IPR003571">
    <property type="entry name" value="Snake_3FTx"/>
</dbReference>
<dbReference type="InterPro" id="IPR045860">
    <property type="entry name" value="Snake_toxin-like_sf"/>
</dbReference>
<dbReference type="InterPro" id="IPR018354">
    <property type="entry name" value="Snake_toxin_con_site"/>
</dbReference>
<dbReference type="InterPro" id="IPR054131">
    <property type="entry name" value="Toxin_cobra-type"/>
</dbReference>
<dbReference type="Pfam" id="PF21947">
    <property type="entry name" value="Toxin_cobra-type"/>
    <property type="match status" value="1"/>
</dbReference>
<dbReference type="SUPFAM" id="SSF57302">
    <property type="entry name" value="Snake toxin-like"/>
    <property type="match status" value="1"/>
</dbReference>
<dbReference type="PROSITE" id="PS00272">
    <property type="entry name" value="SNAKE_TOXIN"/>
    <property type="match status" value="1"/>
</dbReference>
<organism>
    <name type="scientific">Tropidechis carinatus</name>
    <name type="common">Australian rough-scaled snake</name>
    <dbReference type="NCBI Taxonomy" id="100989"/>
    <lineage>
        <taxon>Eukaryota</taxon>
        <taxon>Metazoa</taxon>
        <taxon>Chordata</taxon>
        <taxon>Craniata</taxon>
        <taxon>Vertebrata</taxon>
        <taxon>Euteleostomi</taxon>
        <taxon>Lepidosauria</taxon>
        <taxon>Squamata</taxon>
        <taxon>Bifurcata</taxon>
        <taxon>Unidentata</taxon>
        <taxon>Episquamata</taxon>
        <taxon>Toxicofera</taxon>
        <taxon>Serpentes</taxon>
        <taxon>Colubroidea</taxon>
        <taxon>Elapidae</taxon>
        <taxon>Notechinae</taxon>
        <taxon>Tropidechis</taxon>
    </lineage>
</organism>
<name>3S12_TROCA</name>